<accession>Q3MIV0</accession>
<name>KR221_HUMAN</name>
<gene>
    <name type="primary">KRTAP22-1</name>
    <name type="synonym">KAP22.1</name>
</gene>
<dbReference type="EMBL" id="AB096953">
    <property type="protein sequence ID" value="BAE46368.1"/>
    <property type="molecule type" value="mRNA"/>
</dbReference>
<dbReference type="EMBL" id="AP001069">
    <property type="status" value="NOT_ANNOTATED_CDS"/>
    <property type="molecule type" value="Genomic_DNA"/>
</dbReference>
<dbReference type="EMBL" id="BC101682">
    <property type="protein sequence ID" value="AAI01683.1"/>
    <property type="molecule type" value="mRNA"/>
</dbReference>
<dbReference type="EMBL" id="BC101686">
    <property type="protein sequence ID" value="AAI01687.1"/>
    <property type="molecule type" value="mRNA"/>
</dbReference>
<dbReference type="CCDS" id="CCDS13601.1"/>
<dbReference type="RefSeq" id="NP_853651.1">
    <property type="nucleotide sequence ID" value="NM_181620.2"/>
</dbReference>
<dbReference type="BioGRID" id="130662">
    <property type="interactions" value="14"/>
</dbReference>
<dbReference type="FunCoup" id="Q3MIV0">
    <property type="interactions" value="7"/>
</dbReference>
<dbReference type="STRING" id="9606.ENSP00000333887"/>
<dbReference type="BioMuta" id="KRTAP22-1"/>
<dbReference type="DMDM" id="296434555"/>
<dbReference type="PaxDb" id="9606-ENSP00000333887"/>
<dbReference type="Antibodypedia" id="48645">
    <property type="antibodies" value="4 antibodies from 3 providers"/>
</dbReference>
<dbReference type="DNASU" id="337979"/>
<dbReference type="Ensembl" id="ENST00000334680.3">
    <property type="protein sequence ID" value="ENSP00000333887.2"/>
    <property type="gene ID" value="ENSG00000186924.3"/>
</dbReference>
<dbReference type="GeneID" id="337979"/>
<dbReference type="KEGG" id="hsa:337979"/>
<dbReference type="MANE-Select" id="ENST00000334680.3">
    <property type="protein sequence ID" value="ENSP00000333887.2"/>
    <property type="RefSeq nucleotide sequence ID" value="NM_181620.2"/>
    <property type="RefSeq protein sequence ID" value="NP_853651.1"/>
</dbReference>
<dbReference type="UCSC" id="uc011add.3">
    <property type="organism name" value="human"/>
</dbReference>
<dbReference type="AGR" id="HGNC:18947"/>
<dbReference type="CTD" id="337979"/>
<dbReference type="GeneCards" id="KRTAP22-1"/>
<dbReference type="HGNC" id="HGNC:18947">
    <property type="gene designation" value="KRTAP22-1"/>
</dbReference>
<dbReference type="HPA" id="ENSG00000186924">
    <property type="expression patterns" value="Not detected"/>
</dbReference>
<dbReference type="neXtProt" id="NX_Q3MIV0"/>
<dbReference type="PharmGKB" id="PA134897377"/>
<dbReference type="VEuPathDB" id="HostDB:ENSG00000186924"/>
<dbReference type="eggNOG" id="ENOG502TEIF">
    <property type="taxonomic scope" value="Eukaryota"/>
</dbReference>
<dbReference type="GeneTree" id="ENSGT00860000134312"/>
<dbReference type="HOGENOM" id="CLU_184630_3_1_1"/>
<dbReference type="InParanoid" id="Q3MIV0"/>
<dbReference type="PAN-GO" id="Q3MIV0">
    <property type="GO annotations" value="0 GO annotations based on evolutionary models"/>
</dbReference>
<dbReference type="PhylomeDB" id="Q3MIV0"/>
<dbReference type="TreeFam" id="TF341664"/>
<dbReference type="PathwayCommons" id="Q3MIV0"/>
<dbReference type="Reactome" id="R-HSA-6805567">
    <property type="pathway name" value="Keratinization"/>
</dbReference>
<dbReference type="BioGRID-ORCS" id="337979">
    <property type="hits" value="11 hits in 1133 CRISPR screens"/>
</dbReference>
<dbReference type="GenomeRNAi" id="337979"/>
<dbReference type="Pharos" id="Q3MIV0">
    <property type="development level" value="Tdark"/>
</dbReference>
<dbReference type="PRO" id="PR:Q3MIV0"/>
<dbReference type="Proteomes" id="UP000005640">
    <property type="component" value="Chromosome 21"/>
</dbReference>
<dbReference type="Bgee" id="ENSG00000186924">
    <property type="expression patterns" value="Expressed in male germ line stem cell (sensu Vertebrata) in testis and 10 other cell types or tissues"/>
</dbReference>
<dbReference type="GO" id="GO:0005829">
    <property type="term" value="C:cytosol"/>
    <property type="evidence" value="ECO:0000304"/>
    <property type="project" value="Reactome"/>
</dbReference>
<dbReference type="GO" id="GO:0005882">
    <property type="term" value="C:intermediate filament"/>
    <property type="evidence" value="ECO:0007669"/>
    <property type="project" value="UniProtKB-KW"/>
</dbReference>
<dbReference type="InterPro" id="IPR052878">
    <property type="entry name" value="KRTAP_matrix"/>
</dbReference>
<dbReference type="InterPro" id="IPR021743">
    <property type="entry name" value="KRTAP_type8/19/20/21/22"/>
</dbReference>
<dbReference type="PANTHER" id="PTHR39653">
    <property type="entry name" value="KERATIN-ASSOCIATED PROTEIN 20-2"/>
    <property type="match status" value="1"/>
</dbReference>
<dbReference type="PANTHER" id="PTHR39653:SF2">
    <property type="entry name" value="KERATIN-ASSOCIATED PROTEIN 22-1"/>
    <property type="match status" value="1"/>
</dbReference>
<dbReference type="Pfam" id="PF11759">
    <property type="entry name" value="KRTAP"/>
    <property type="match status" value="1"/>
</dbReference>
<feature type="chain" id="PRO_0000223914" description="Keratin-associated protein 22-1">
    <location>
        <begin position="1"/>
        <end position="48"/>
    </location>
</feature>
<feature type="sequence variant" id="VAR_060443" description="In dbSNP:rs198915." evidence="2 3 4">
    <original>L</original>
    <variation>H</variation>
    <location>
        <position position="26"/>
    </location>
</feature>
<feature type="sequence variant" id="VAR_057650" description="In dbSNP:rs724849.">
    <original>Y</original>
    <variation>C</variation>
    <location>
        <position position="29"/>
    </location>
</feature>
<protein>
    <recommendedName>
        <fullName>Keratin-associated protein 22-1</fullName>
    </recommendedName>
</protein>
<evidence type="ECO:0000250" key="1"/>
<evidence type="ECO:0000269" key="2">
    <source>
    </source>
</evidence>
<evidence type="ECO:0000269" key="3">
    <source>
    </source>
</evidence>
<evidence type="ECO:0000269" key="4">
    <source ref="1"/>
</evidence>
<proteinExistence type="inferred from homology"/>
<comment type="function">
    <text>In the hair cortex, hair keratin intermediate filaments are embedded in an interfilamentous matrix, consisting of hair keratin-associated proteins (KRTAP), which are essential for the formation of a rigid and resistant hair shaft through their extensive disulfide bond cross-linking with abundant cysteine residues of hair keratins. The matrix proteins include the high-sulfur and high-glycine-tyrosine keratins.</text>
</comment>
<comment type="subunit">
    <text evidence="1">Interacts with hair keratins.</text>
</comment>
<reference key="1">
    <citation type="submission" date="2002-11" db="EMBL/GenBank/DDBJ databases">
        <title>Identification of complete keratin-associated protein (KAP) gene cluster spanning 800 kb region on human chromosome 21q22.11.</title>
        <authorList>
            <person name="Obayashi I."/>
            <person name="Shibuya K."/>
            <person name="Minoshima S."/>
            <person name="Kudoh J."/>
            <person name="Shimizu N."/>
        </authorList>
    </citation>
    <scope>NUCLEOTIDE SEQUENCE [MRNA]</scope>
    <scope>VARIANT HIS-26</scope>
    <source>
        <tissue>Hair root</tissue>
    </source>
</reference>
<reference key="2">
    <citation type="journal article" date="2000" name="Nature">
        <title>The DNA sequence of human chromosome 21.</title>
        <authorList>
            <person name="Hattori M."/>
            <person name="Fujiyama A."/>
            <person name="Taylor T.D."/>
            <person name="Watanabe H."/>
            <person name="Yada T."/>
            <person name="Park H.-S."/>
            <person name="Toyoda A."/>
            <person name="Ishii K."/>
            <person name="Totoki Y."/>
            <person name="Choi D.-K."/>
            <person name="Groner Y."/>
            <person name="Soeda E."/>
            <person name="Ohki M."/>
            <person name="Takagi T."/>
            <person name="Sakaki Y."/>
            <person name="Taudien S."/>
            <person name="Blechschmidt K."/>
            <person name="Polley A."/>
            <person name="Menzel U."/>
            <person name="Delabar J."/>
            <person name="Kumpf K."/>
            <person name="Lehmann R."/>
            <person name="Patterson D."/>
            <person name="Reichwald K."/>
            <person name="Rump A."/>
            <person name="Schillhabel M."/>
            <person name="Schudy A."/>
            <person name="Zimmermann W."/>
            <person name="Rosenthal A."/>
            <person name="Kudoh J."/>
            <person name="Shibuya K."/>
            <person name="Kawasaki K."/>
            <person name="Asakawa S."/>
            <person name="Shintani A."/>
            <person name="Sasaki T."/>
            <person name="Nagamine K."/>
            <person name="Mitsuyama S."/>
            <person name="Antonarakis S.E."/>
            <person name="Minoshima S."/>
            <person name="Shimizu N."/>
            <person name="Nordsiek G."/>
            <person name="Hornischer K."/>
            <person name="Brandt P."/>
            <person name="Scharfe M."/>
            <person name="Schoen O."/>
            <person name="Desario A."/>
            <person name="Reichelt J."/>
            <person name="Kauer G."/>
            <person name="Bloecker H."/>
            <person name="Ramser J."/>
            <person name="Beck A."/>
            <person name="Klages S."/>
            <person name="Hennig S."/>
            <person name="Riesselmann L."/>
            <person name="Dagand E."/>
            <person name="Wehrmeyer S."/>
            <person name="Borzym K."/>
            <person name="Gardiner K."/>
            <person name="Nizetic D."/>
            <person name="Francis F."/>
            <person name="Lehrach H."/>
            <person name="Reinhardt R."/>
            <person name="Yaspo M.-L."/>
        </authorList>
    </citation>
    <scope>NUCLEOTIDE SEQUENCE [LARGE SCALE GENOMIC DNA]</scope>
    <scope>VARIANT HIS-26</scope>
</reference>
<reference key="3">
    <citation type="journal article" date="2004" name="Genome Res.">
        <title>The status, quality, and expansion of the NIH full-length cDNA project: the Mammalian Gene Collection (MGC).</title>
        <authorList>
            <consortium name="The MGC Project Team"/>
        </authorList>
    </citation>
    <scope>NUCLEOTIDE SEQUENCE [LARGE SCALE MRNA]</scope>
    <scope>VARIANT HIS-26</scope>
    <source>
        <tissue>Cerebellum</tissue>
    </source>
</reference>
<sequence length="48" mass="5275">MSFDNNYHGGQGYAKGGLGCSYGCGLSGYGYACYCPWCYERSWFSGCF</sequence>
<keyword id="KW-0416">Keratin</keyword>
<keyword id="KW-1185">Reference proteome</keyword>
<keyword id="KW-0677">Repeat</keyword>
<organism>
    <name type="scientific">Homo sapiens</name>
    <name type="common">Human</name>
    <dbReference type="NCBI Taxonomy" id="9606"/>
    <lineage>
        <taxon>Eukaryota</taxon>
        <taxon>Metazoa</taxon>
        <taxon>Chordata</taxon>
        <taxon>Craniata</taxon>
        <taxon>Vertebrata</taxon>
        <taxon>Euteleostomi</taxon>
        <taxon>Mammalia</taxon>
        <taxon>Eutheria</taxon>
        <taxon>Euarchontoglires</taxon>
        <taxon>Primates</taxon>
        <taxon>Haplorrhini</taxon>
        <taxon>Catarrhini</taxon>
        <taxon>Hominidae</taxon>
        <taxon>Homo</taxon>
    </lineage>
</organism>